<organism>
    <name type="scientific">Nitratidesulfovibrio vulgaris (strain DP4)</name>
    <name type="common">Desulfovibrio vulgaris</name>
    <dbReference type="NCBI Taxonomy" id="391774"/>
    <lineage>
        <taxon>Bacteria</taxon>
        <taxon>Pseudomonadati</taxon>
        <taxon>Thermodesulfobacteriota</taxon>
        <taxon>Desulfovibrionia</taxon>
        <taxon>Desulfovibrionales</taxon>
        <taxon>Desulfovibrionaceae</taxon>
        <taxon>Nitratidesulfovibrio</taxon>
    </lineage>
</organism>
<name>LEUD_NITV4</name>
<dbReference type="EC" id="4.2.1.33" evidence="1"/>
<dbReference type="EMBL" id="CP000527">
    <property type="protein sequence ID" value="ABM27412.1"/>
    <property type="molecule type" value="Genomic_DNA"/>
</dbReference>
<dbReference type="RefSeq" id="WP_010940242.1">
    <property type="nucleotide sequence ID" value="NC_008751.1"/>
</dbReference>
<dbReference type="SMR" id="A1VAE6"/>
<dbReference type="KEGG" id="dvl:Dvul_0389"/>
<dbReference type="HOGENOM" id="CLU_081378_1_1_7"/>
<dbReference type="UniPathway" id="UPA00048">
    <property type="reaction ID" value="UER00071"/>
</dbReference>
<dbReference type="Proteomes" id="UP000009173">
    <property type="component" value="Chromosome"/>
</dbReference>
<dbReference type="GO" id="GO:0003861">
    <property type="term" value="F:3-isopropylmalate dehydratase activity"/>
    <property type="evidence" value="ECO:0007669"/>
    <property type="project" value="UniProtKB-UniRule"/>
</dbReference>
<dbReference type="GO" id="GO:0009098">
    <property type="term" value="P:L-leucine biosynthetic process"/>
    <property type="evidence" value="ECO:0007669"/>
    <property type="project" value="UniProtKB-UniRule"/>
</dbReference>
<dbReference type="CDD" id="cd01577">
    <property type="entry name" value="IPMI_Swivel"/>
    <property type="match status" value="1"/>
</dbReference>
<dbReference type="Gene3D" id="3.20.19.10">
    <property type="entry name" value="Aconitase, domain 4"/>
    <property type="match status" value="1"/>
</dbReference>
<dbReference type="HAMAP" id="MF_01032">
    <property type="entry name" value="LeuD_type2"/>
    <property type="match status" value="1"/>
</dbReference>
<dbReference type="InterPro" id="IPR015928">
    <property type="entry name" value="Aconitase/3IPM_dehydase_swvl"/>
</dbReference>
<dbReference type="InterPro" id="IPR000573">
    <property type="entry name" value="AconitaseA/IPMdHydase_ssu_swvl"/>
</dbReference>
<dbReference type="InterPro" id="IPR033940">
    <property type="entry name" value="IPMI_Swivel"/>
</dbReference>
<dbReference type="InterPro" id="IPR050075">
    <property type="entry name" value="LeuD"/>
</dbReference>
<dbReference type="InterPro" id="IPR011827">
    <property type="entry name" value="LeuD_type2/HacB/DmdB"/>
</dbReference>
<dbReference type="NCBIfam" id="TIGR02087">
    <property type="entry name" value="LEUD_arch"/>
    <property type="match status" value="1"/>
</dbReference>
<dbReference type="PANTHER" id="PTHR43345:SF2">
    <property type="entry name" value="3-ISOPROPYLMALATE DEHYDRATASE SMALL SUBUNIT 1"/>
    <property type="match status" value="1"/>
</dbReference>
<dbReference type="PANTHER" id="PTHR43345">
    <property type="entry name" value="3-ISOPROPYLMALATE DEHYDRATASE SMALL SUBUNIT 2-RELATED-RELATED"/>
    <property type="match status" value="1"/>
</dbReference>
<dbReference type="Pfam" id="PF00694">
    <property type="entry name" value="Aconitase_C"/>
    <property type="match status" value="1"/>
</dbReference>
<dbReference type="SUPFAM" id="SSF52016">
    <property type="entry name" value="LeuD/IlvD-like"/>
    <property type="match status" value="1"/>
</dbReference>
<sequence>MRYAGTAHKVGDHIDTDAIIPARFLVTTDAQKLGENCMEGLEHGWVARVKSGDIMVGGRNFGCGSSREHAPIAILGAGMPVVVAHSFARIFYRNGFNMGLLLLEVGDDVDKIADGDDIEVDAASGVITNRTTGATITCAPVPQSMRELLDTGGLVPYVRARLERENG</sequence>
<gene>
    <name evidence="1" type="primary">leuD</name>
    <name type="ordered locus">Dvul_0389</name>
</gene>
<protein>
    <recommendedName>
        <fullName evidence="1">3-isopropylmalate dehydratase small subunit</fullName>
        <ecNumber evidence="1">4.2.1.33</ecNumber>
    </recommendedName>
    <alternativeName>
        <fullName evidence="1">Alpha-IPM isomerase</fullName>
        <shortName evidence="1">IPMI</shortName>
    </alternativeName>
    <alternativeName>
        <fullName evidence="1">Isopropylmalate isomerase</fullName>
    </alternativeName>
</protein>
<evidence type="ECO:0000255" key="1">
    <source>
        <dbReference type="HAMAP-Rule" id="MF_01032"/>
    </source>
</evidence>
<comment type="function">
    <text evidence="1">Catalyzes the isomerization between 2-isopropylmalate and 3-isopropylmalate, via the formation of 2-isopropylmaleate.</text>
</comment>
<comment type="catalytic activity">
    <reaction evidence="1">
        <text>(2R,3S)-3-isopropylmalate = (2S)-2-isopropylmalate</text>
        <dbReference type="Rhea" id="RHEA:32287"/>
        <dbReference type="ChEBI" id="CHEBI:1178"/>
        <dbReference type="ChEBI" id="CHEBI:35121"/>
        <dbReference type="EC" id="4.2.1.33"/>
    </reaction>
</comment>
<comment type="pathway">
    <text evidence="1">Amino-acid biosynthesis; L-leucine biosynthesis; L-leucine from 3-methyl-2-oxobutanoate: step 2/4.</text>
</comment>
<comment type="subunit">
    <text evidence="1">Heterodimer of LeuC and LeuD.</text>
</comment>
<comment type="similarity">
    <text evidence="1">Belongs to the LeuD family. LeuD type 2 subfamily.</text>
</comment>
<reference key="1">
    <citation type="journal article" date="2009" name="Environ. Microbiol.">
        <title>Contribution of mobile genetic elements to Desulfovibrio vulgaris genome plasticity.</title>
        <authorList>
            <person name="Walker C.B."/>
            <person name="Stolyar S."/>
            <person name="Chivian D."/>
            <person name="Pinel N."/>
            <person name="Gabster J.A."/>
            <person name="Dehal P.S."/>
            <person name="He Z."/>
            <person name="Yang Z.K."/>
            <person name="Yen H.C."/>
            <person name="Zhou J."/>
            <person name="Wall J.D."/>
            <person name="Hazen T.C."/>
            <person name="Arkin A.P."/>
            <person name="Stahl D.A."/>
        </authorList>
    </citation>
    <scope>NUCLEOTIDE SEQUENCE [LARGE SCALE GENOMIC DNA]</scope>
    <source>
        <strain>DP4</strain>
    </source>
</reference>
<feature type="chain" id="PRO_1000072967" description="3-isopropylmalate dehydratase small subunit">
    <location>
        <begin position="1"/>
        <end position="167"/>
    </location>
</feature>
<proteinExistence type="inferred from homology"/>
<keyword id="KW-0028">Amino-acid biosynthesis</keyword>
<keyword id="KW-0100">Branched-chain amino acid biosynthesis</keyword>
<keyword id="KW-0432">Leucine biosynthesis</keyword>
<keyword id="KW-0456">Lyase</keyword>
<accession>A1VAE6</accession>